<feature type="chain" id="PRO_0000241186" description="Aspartyl/glutamyl-tRNA(Asn/Gln) amidotransferase subunit B">
    <location>
        <begin position="1"/>
        <end position="491"/>
    </location>
</feature>
<keyword id="KW-0067">ATP-binding</keyword>
<keyword id="KW-0436">Ligase</keyword>
<keyword id="KW-0547">Nucleotide-binding</keyword>
<keyword id="KW-0648">Protein biosynthesis</keyword>
<protein>
    <recommendedName>
        <fullName evidence="1">Aspartyl/glutamyl-tRNA(Asn/Gln) amidotransferase subunit B</fullName>
        <shortName evidence="1">Asp/Glu-ADT subunit B</shortName>
        <ecNumber evidence="1">6.3.5.-</ecNumber>
    </recommendedName>
</protein>
<sequence length="491" mass="54584">MTSATTVKTEYEAIIGLETHCQLSTNTKIFSSSSTAFGADPNTNIDPVCMGLPGVLPVLNEKVLEYAVKAGLALNCQIAKYSKFDRKQYFYPDLPKNYQISQYDLPIAEHGWLEIELLDAEGNPKRKRIGITRLHMEEDAGKLVHAGSDRISGSTYSLVDYNRAGVPLVEIVSEPDIRTGQEAAEYAQELRRVMRYLGVSDGNMQEGSLRCDVNISVRPVGQEKFGTKVEIKNMNSFSAIQKAIEHEIERQIEAIESGEKIIQETRLWEEGSQRTISMRTKEGSSDYRYFPEPDLAPIEVSEAQLSQWRGELPELPAQKRHRYESELGLSAYDTRVLTEDVTVSQYFEAAIASGANPKAAANWITQDIAAYLNKQKLSIAEIGLTPANLADVITRIETGKISNAQAKQKLPELLTGLSPEKAFAGQELISDLSVLEPIVDEVIAANPKELEKYRNGNINLKGFFVGQVLKKTNKRADPKLTNELVEKKLNG</sequence>
<name>GATB_TRIV2</name>
<accession>Q3M629</accession>
<gene>
    <name evidence="1" type="primary">gatB</name>
    <name type="ordered locus">Ava_3952</name>
</gene>
<proteinExistence type="inferred from homology"/>
<reference key="1">
    <citation type="journal article" date="2014" name="Stand. Genomic Sci.">
        <title>Complete genome sequence of Anabaena variabilis ATCC 29413.</title>
        <authorList>
            <person name="Thiel T."/>
            <person name="Pratte B.S."/>
            <person name="Zhong J."/>
            <person name="Goodwin L."/>
            <person name="Copeland A."/>
            <person name="Lucas S."/>
            <person name="Han C."/>
            <person name="Pitluck S."/>
            <person name="Land M.L."/>
            <person name="Kyrpides N.C."/>
            <person name="Woyke T."/>
        </authorList>
    </citation>
    <scope>NUCLEOTIDE SEQUENCE [LARGE SCALE GENOMIC DNA]</scope>
    <source>
        <strain>ATCC 29413 / PCC 7937</strain>
    </source>
</reference>
<organism>
    <name type="scientific">Trichormus variabilis (strain ATCC 29413 / PCC 7937)</name>
    <name type="common">Anabaena variabilis</name>
    <dbReference type="NCBI Taxonomy" id="240292"/>
    <lineage>
        <taxon>Bacteria</taxon>
        <taxon>Bacillati</taxon>
        <taxon>Cyanobacteriota</taxon>
        <taxon>Cyanophyceae</taxon>
        <taxon>Nostocales</taxon>
        <taxon>Nostocaceae</taxon>
        <taxon>Trichormus</taxon>
    </lineage>
</organism>
<evidence type="ECO:0000255" key="1">
    <source>
        <dbReference type="HAMAP-Rule" id="MF_00121"/>
    </source>
</evidence>
<comment type="function">
    <text evidence="1">Allows the formation of correctly charged Asn-tRNA(Asn) or Gln-tRNA(Gln) through the transamidation of misacylated Asp-tRNA(Asn) or Glu-tRNA(Gln) in organisms which lack either or both of asparaginyl-tRNA or glutaminyl-tRNA synthetases. The reaction takes place in the presence of glutamine and ATP through an activated phospho-Asp-tRNA(Asn) or phospho-Glu-tRNA(Gln).</text>
</comment>
<comment type="catalytic activity">
    <reaction evidence="1">
        <text>L-glutamyl-tRNA(Gln) + L-glutamine + ATP + H2O = L-glutaminyl-tRNA(Gln) + L-glutamate + ADP + phosphate + H(+)</text>
        <dbReference type="Rhea" id="RHEA:17521"/>
        <dbReference type="Rhea" id="RHEA-COMP:9681"/>
        <dbReference type="Rhea" id="RHEA-COMP:9684"/>
        <dbReference type="ChEBI" id="CHEBI:15377"/>
        <dbReference type="ChEBI" id="CHEBI:15378"/>
        <dbReference type="ChEBI" id="CHEBI:29985"/>
        <dbReference type="ChEBI" id="CHEBI:30616"/>
        <dbReference type="ChEBI" id="CHEBI:43474"/>
        <dbReference type="ChEBI" id="CHEBI:58359"/>
        <dbReference type="ChEBI" id="CHEBI:78520"/>
        <dbReference type="ChEBI" id="CHEBI:78521"/>
        <dbReference type="ChEBI" id="CHEBI:456216"/>
    </reaction>
</comment>
<comment type="catalytic activity">
    <reaction evidence="1">
        <text>L-aspartyl-tRNA(Asn) + L-glutamine + ATP + H2O = L-asparaginyl-tRNA(Asn) + L-glutamate + ADP + phosphate + 2 H(+)</text>
        <dbReference type="Rhea" id="RHEA:14513"/>
        <dbReference type="Rhea" id="RHEA-COMP:9674"/>
        <dbReference type="Rhea" id="RHEA-COMP:9677"/>
        <dbReference type="ChEBI" id="CHEBI:15377"/>
        <dbReference type="ChEBI" id="CHEBI:15378"/>
        <dbReference type="ChEBI" id="CHEBI:29985"/>
        <dbReference type="ChEBI" id="CHEBI:30616"/>
        <dbReference type="ChEBI" id="CHEBI:43474"/>
        <dbReference type="ChEBI" id="CHEBI:58359"/>
        <dbReference type="ChEBI" id="CHEBI:78515"/>
        <dbReference type="ChEBI" id="CHEBI:78516"/>
        <dbReference type="ChEBI" id="CHEBI:456216"/>
    </reaction>
</comment>
<comment type="subunit">
    <text evidence="1">Heterotrimer of A, B and C subunits.</text>
</comment>
<comment type="similarity">
    <text evidence="1">Belongs to the GatB/GatE family. GatB subfamily.</text>
</comment>
<dbReference type="EC" id="6.3.5.-" evidence="1"/>
<dbReference type="EMBL" id="CP000117">
    <property type="protein sequence ID" value="ABA23557.1"/>
    <property type="molecule type" value="Genomic_DNA"/>
</dbReference>
<dbReference type="SMR" id="Q3M629"/>
<dbReference type="STRING" id="240292.Ava_3952"/>
<dbReference type="KEGG" id="ava:Ava_3952"/>
<dbReference type="eggNOG" id="COG0064">
    <property type="taxonomic scope" value="Bacteria"/>
</dbReference>
<dbReference type="HOGENOM" id="CLU_019240_0_0_3"/>
<dbReference type="Proteomes" id="UP000002533">
    <property type="component" value="Chromosome"/>
</dbReference>
<dbReference type="GO" id="GO:0050566">
    <property type="term" value="F:asparaginyl-tRNA synthase (glutamine-hydrolyzing) activity"/>
    <property type="evidence" value="ECO:0007669"/>
    <property type="project" value="RHEA"/>
</dbReference>
<dbReference type="GO" id="GO:0005524">
    <property type="term" value="F:ATP binding"/>
    <property type="evidence" value="ECO:0007669"/>
    <property type="project" value="UniProtKB-KW"/>
</dbReference>
<dbReference type="GO" id="GO:0050567">
    <property type="term" value="F:glutaminyl-tRNA synthase (glutamine-hydrolyzing) activity"/>
    <property type="evidence" value="ECO:0007669"/>
    <property type="project" value="UniProtKB-UniRule"/>
</dbReference>
<dbReference type="GO" id="GO:0070681">
    <property type="term" value="P:glutaminyl-tRNAGln biosynthesis via transamidation"/>
    <property type="evidence" value="ECO:0007669"/>
    <property type="project" value="TreeGrafter"/>
</dbReference>
<dbReference type="GO" id="GO:0006412">
    <property type="term" value="P:translation"/>
    <property type="evidence" value="ECO:0007669"/>
    <property type="project" value="UniProtKB-UniRule"/>
</dbReference>
<dbReference type="FunFam" id="1.10.10.410:FF:000001">
    <property type="entry name" value="Aspartyl/glutamyl-tRNA(Asn/Gln) amidotransferase subunit B"/>
    <property type="match status" value="1"/>
</dbReference>
<dbReference type="FunFam" id="1.10.150.380:FF:000001">
    <property type="entry name" value="Aspartyl/glutamyl-tRNA(Asn/Gln) amidotransferase subunit B"/>
    <property type="match status" value="1"/>
</dbReference>
<dbReference type="Gene3D" id="1.10.10.410">
    <property type="match status" value="1"/>
</dbReference>
<dbReference type="Gene3D" id="1.10.150.380">
    <property type="entry name" value="GatB domain, N-terminal subdomain"/>
    <property type="match status" value="1"/>
</dbReference>
<dbReference type="HAMAP" id="MF_00121">
    <property type="entry name" value="GatB"/>
    <property type="match status" value="1"/>
</dbReference>
<dbReference type="InterPro" id="IPR017959">
    <property type="entry name" value="Asn/Gln-tRNA_amidoTrfase_suB/E"/>
</dbReference>
<dbReference type="InterPro" id="IPR006075">
    <property type="entry name" value="Asn/Gln-tRNA_Trfase_suB/E_cat"/>
</dbReference>
<dbReference type="InterPro" id="IPR018027">
    <property type="entry name" value="Asn/Gln_amidotransferase"/>
</dbReference>
<dbReference type="InterPro" id="IPR003789">
    <property type="entry name" value="Asn/Gln_tRNA_amidoTrase-B-like"/>
</dbReference>
<dbReference type="InterPro" id="IPR004413">
    <property type="entry name" value="GatB"/>
</dbReference>
<dbReference type="InterPro" id="IPR042114">
    <property type="entry name" value="GatB_C_1"/>
</dbReference>
<dbReference type="InterPro" id="IPR023168">
    <property type="entry name" value="GatB_Yqey_C_2"/>
</dbReference>
<dbReference type="InterPro" id="IPR017958">
    <property type="entry name" value="Gln-tRNA_amidoTrfase_suB_CS"/>
</dbReference>
<dbReference type="InterPro" id="IPR014746">
    <property type="entry name" value="Gln_synth/guanido_kin_cat_dom"/>
</dbReference>
<dbReference type="NCBIfam" id="TIGR00133">
    <property type="entry name" value="gatB"/>
    <property type="match status" value="1"/>
</dbReference>
<dbReference type="NCBIfam" id="NF004012">
    <property type="entry name" value="PRK05477.1-2"/>
    <property type="match status" value="1"/>
</dbReference>
<dbReference type="NCBIfam" id="NF004014">
    <property type="entry name" value="PRK05477.1-4"/>
    <property type="match status" value="1"/>
</dbReference>
<dbReference type="PANTHER" id="PTHR11659">
    <property type="entry name" value="GLUTAMYL-TRNA GLN AMIDOTRANSFERASE SUBUNIT B MITOCHONDRIAL AND PROKARYOTIC PET112-RELATED"/>
    <property type="match status" value="1"/>
</dbReference>
<dbReference type="PANTHER" id="PTHR11659:SF0">
    <property type="entry name" value="GLUTAMYL-TRNA(GLN) AMIDOTRANSFERASE SUBUNIT B, MITOCHONDRIAL"/>
    <property type="match status" value="1"/>
</dbReference>
<dbReference type="Pfam" id="PF02934">
    <property type="entry name" value="GatB_N"/>
    <property type="match status" value="1"/>
</dbReference>
<dbReference type="Pfam" id="PF02637">
    <property type="entry name" value="GatB_Yqey"/>
    <property type="match status" value="1"/>
</dbReference>
<dbReference type="SMART" id="SM00845">
    <property type="entry name" value="GatB_Yqey"/>
    <property type="match status" value="1"/>
</dbReference>
<dbReference type="SUPFAM" id="SSF89095">
    <property type="entry name" value="GatB/YqeY motif"/>
    <property type="match status" value="1"/>
</dbReference>
<dbReference type="SUPFAM" id="SSF55931">
    <property type="entry name" value="Glutamine synthetase/guanido kinase"/>
    <property type="match status" value="1"/>
</dbReference>
<dbReference type="PROSITE" id="PS01234">
    <property type="entry name" value="GATB"/>
    <property type="match status" value="1"/>
</dbReference>